<sequence length="202" mass="22583">MKFFLDLLPVILFFVAYKFAGAAPDDSHALVAQFLGAGISPSQAPILIATAVAIAATLAQVLIVWLRHGKVDKMLWVSLAIITLFGGATLVFHNPTFIKWKPTVFYWTFAGALAVSALLFRRNLVQKMLEAQIRLPAPVWQRLNLAWIGFFTLMGFLNLYVAYGYSEEAWVNFKLFGAMGLMLAFFLGQGFYLSRHLEEDAK</sequence>
<feature type="chain" id="PRO_1000020982" description="Inner membrane-spanning protein YciB">
    <location>
        <begin position="1"/>
        <end position="202"/>
    </location>
</feature>
<feature type="transmembrane region" description="Helical" evidence="1">
    <location>
        <begin position="3"/>
        <end position="23"/>
    </location>
</feature>
<feature type="transmembrane region" description="Helical" evidence="1">
    <location>
        <begin position="46"/>
        <end position="66"/>
    </location>
</feature>
<feature type="transmembrane region" description="Helical" evidence="1">
    <location>
        <begin position="74"/>
        <end position="94"/>
    </location>
</feature>
<feature type="transmembrane region" description="Helical" evidence="1">
    <location>
        <begin position="100"/>
        <end position="120"/>
    </location>
</feature>
<feature type="transmembrane region" description="Helical" evidence="1">
    <location>
        <begin position="145"/>
        <end position="165"/>
    </location>
</feature>
<feature type="transmembrane region" description="Helical" evidence="1">
    <location>
        <begin position="173"/>
        <end position="193"/>
    </location>
</feature>
<dbReference type="EMBL" id="AM406670">
    <property type="protein sequence ID" value="CAL94323.1"/>
    <property type="molecule type" value="Genomic_DNA"/>
</dbReference>
<dbReference type="RefSeq" id="WP_011765439.1">
    <property type="nucleotide sequence ID" value="NC_008702.1"/>
</dbReference>
<dbReference type="STRING" id="62928.azo1706"/>
<dbReference type="KEGG" id="azo:azo1706"/>
<dbReference type="eggNOG" id="COG2917">
    <property type="taxonomic scope" value="Bacteria"/>
</dbReference>
<dbReference type="HOGENOM" id="CLU_089554_2_0_4"/>
<dbReference type="Proteomes" id="UP000002588">
    <property type="component" value="Chromosome"/>
</dbReference>
<dbReference type="GO" id="GO:0005886">
    <property type="term" value="C:plasma membrane"/>
    <property type="evidence" value="ECO:0007669"/>
    <property type="project" value="UniProtKB-SubCell"/>
</dbReference>
<dbReference type="HAMAP" id="MF_00189">
    <property type="entry name" value="YciB"/>
    <property type="match status" value="1"/>
</dbReference>
<dbReference type="InterPro" id="IPR006008">
    <property type="entry name" value="YciB"/>
</dbReference>
<dbReference type="NCBIfam" id="TIGR00997">
    <property type="entry name" value="ispZ"/>
    <property type="match status" value="1"/>
</dbReference>
<dbReference type="NCBIfam" id="NF001325">
    <property type="entry name" value="PRK00259.1-3"/>
    <property type="match status" value="1"/>
</dbReference>
<dbReference type="PANTHER" id="PTHR36917:SF1">
    <property type="entry name" value="INNER MEMBRANE-SPANNING PROTEIN YCIB"/>
    <property type="match status" value="1"/>
</dbReference>
<dbReference type="PANTHER" id="PTHR36917">
    <property type="entry name" value="INTRACELLULAR SEPTATION PROTEIN A-RELATED"/>
    <property type="match status" value="1"/>
</dbReference>
<dbReference type="Pfam" id="PF04279">
    <property type="entry name" value="IspA"/>
    <property type="match status" value="1"/>
</dbReference>
<comment type="function">
    <text evidence="1">Plays a role in cell envelope biogenesis, maintenance of cell envelope integrity and membrane homeostasis.</text>
</comment>
<comment type="subcellular location">
    <subcellularLocation>
        <location evidence="1">Cell inner membrane</location>
        <topology evidence="1">Multi-pass membrane protein</topology>
    </subcellularLocation>
</comment>
<comment type="similarity">
    <text evidence="1">Belongs to the YciB family.</text>
</comment>
<gene>
    <name evidence="1" type="primary">yciB</name>
    <name type="ordered locus">azo1706</name>
</gene>
<proteinExistence type="inferred from homology"/>
<evidence type="ECO:0000255" key="1">
    <source>
        <dbReference type="HAMAP-Rule" id="MF_00189"/>
    </source>
</evidence>
<protein>
    <recommendedName>
        <fullName evidence="1">Inner membrane-spanning protein YciB</fullName>
    </recommendedName>
</protein>
<name>YCIB_AZOSB</name>
<keyword id="KW-0997">Cell inner membrane</keyword>
<keyword id="KW-1003">Cell membrane</keyword>
<keyword id="KW-0472">Membrane</keyword>
<keyword id="KW-1185">Reference proteome</keyword>
<keyword id="KW-0812">Transmembrane</keyword>
<keyword id="KW-1133">Transmembrane helix</keyword>
<reference key="1">
    <citation type="journal article" date="2006" name="Nat. Biotechnol.">
        <title>Complete genome of the mutualistic, N2-fixing grass endophyte Azoarcus sp. strain BH72.</title>
        <authorList>
            <person name="Krause A."/>
            <person name="Ramakumar A."/>
            <person name="Bartels D."/>
            <person name="Battistoni F."/>
            <person name="Bekel T."/>
            <person name="Boch J."/>
            <person name="Boehm M."/>
            <person name="Friedrich F."/>
            <person name="Hurek T."/>
            <person name="Krause L."/>
            <person name="Linke B."/>
            <person name="McHardy A.C."/>
            <person name="Sarkar A."/>
            <person name="Schneiker S."/>
            <person name="Syed A.A."/>
            <person name="Thauer R."/>
            <person name="Vorhoelter F.-J."/>
            <person name="Weidner S."/>
            <person name="Puehler A."/>
            <person name="Reinhold-Hurek B."/>
            <person name="Kaiser O."/>
            <person name="Goesmann A."/>
        </authorList>
    </citation>
    <scope>NUCLEOTIDE SEQUENCE [LARGE SCALE GENOMIC DNA]</scope>
    <source>
        <strain>BH72</strain>
    </source>
</reference>
<organism>
    <name type="scientific">Azoarcus sp. (strain BH72)</name>
    <dbReference type="NCBI Taxonomy" id="418699"/>
    <lineage>
        <taxon>Bacteria</taxon>
        <taxon>Pseudomonadati</taxon>
        <taxon>Pseudomonadota</taxon>
        <taxon>Betaproteobacteria</taxon>
        <taxon>Rhodocyclales</taxon>
        <taxon>Zoogloeaceae</taxon>
        <taxon>Azoarcus</taxon>
    </lineage>
</organism>
<accession>A1K668</accession>